<accession>Q06318</accession>
<organism>
    <name type="scientific">Mus musculus</name>
    <name type="common">Mouse</name>
    <dbReference type="NCBI Taxonomy" id="10090"/>
    <lineage>
        <taxon>Eukaryota</taxon>
        <taxon>Metazoa</taxon>
        <taxon>Chordata</taxon>
        <taxon>Craniata</taxon>
        <taxon>Vertebrata</taxon>
        <taxon>Euteleostomi</taxon>
        <taxon>Mammalia</taxon>
        <taxon>Eutheria</taxon>
        <taxon>Euarchontoglires</taxon>
        <taxon>Glires</taxon>
        <taxon>Rodentia</taxon>
        <taxon>Myomorpha</taxon>
        <taxon>Muroidea</taxon>
        <taxon>Muridae</taxon>
        <taxon>Murinae</taxon>
        <taxon>Mus</taxon>
        <taxon>Mus</taxon>
    </lineage>
</organism>
<sequence>MKIAITITVVMLSICCSSASSDICPGFLQVLEALLMESESGYVASLKPFNPGSDLQNAGTQLKRLVDTLPQETRINIMKLTEKILTSPLCKQDLRF</sequence>
<dbReference type="EMBL" id="L04503">
    <property type="protein sequence ID" value="AAA03625.1"/>
    <property type="molecule type" value="mRNA"/>
</dbReference>
<dbReference type="EMBL" id="L24372">
    <property type="protein sequence ID" value="AAA65446.1"/>
    <property type="molecule type" value="Genomic_DNA"/>
</dbReference>
<dbReference type="EMBL" id="X67702">
    <property type="protein sequence ID" value="CAA47936.1"/>
    <property type="molecule type" value="mRNA"/>
</dbReference>
<dbReference type="EMBL" id="U01247">
    <property type="protein sequence ID" value="AAA16141.1"/>
    <property type="molecule type" value="Unassigned_DNA"/>
</dbReference>
<dbReference type="EMBL" id="BC027518">
    <property type="protein sequence ID" value="AAH27518.1"/>
    <property type="molecule type" value="mRNA"/>
</dbReference>
<dbReference type="CCDS" id="CCDS37911.1"/>
<dbReference type="PIR" id="A53025">
    <property type="entry name" value="UGMS"/>
</dbReference>
<dbReference type="RefSeq" id="NP_035811.1">
    <property type="nucleotide sequence ID" value="NM_011681.2"/>
</dbReference>
<dbReference type="SMR" id="Q06318"/>
<dbReference type="FunCoup" id="Q06318">
    <property type="interactions" value="55"/>
</dbReference>
<dbReference type="STRING" id="10090.ENSMUSP00000025554"/>
<dbReference type="PhosphoSitePlus" id="Q06318"/>
<dbReference type="CPTAC" id="non-CPTAC-3520"/>
<dbReference type="PaxDb" id="10090-ENSMUSP00000025554"/>
<dbReference type="PeptideAtlas" id="Q06318"/>
<dbReference type="ProteomicsDB" id="275398"/>
<dbReference type="Antibodypedia" id="14807">
    <property type="antibodies" value="469 antibodies from 37 providers"/>
</dbReference>
<dbReference type="DNASU" id="22287"/>
<dbReference type="Ensembl" id="ENSMUST00000025554.3">
    <property type="protein sequence ID" value="ENSMUSP00000025554.3"/>
    <property type="gene ID" value="ENSMUSG00000024653.3"/>
</dbReference>
<dbReference type="GeneID" id="22287"/>
<dbReference type="KEGG" id="mmu:22287"/>
<dbReference type="UCSC" id="uc008gom.1">
    <property type="organism name" value="mouse"/>
</dbReference>
<dbReference type="AGR" id="MGI:98919"/>
<dbReference type="CTD" id="7356"/>
<dbReference type="MGI" id="MGI:98919">
    <property type="gene designation" value="Scgb1a1"/>
</dbReference>
<dbReference type="VEuPathDB" id="HostDB:ENSMUSG00000024653"/>
<dbReference type="eggNOG" id="ENOG502SXFT">
    <property type="taxonomic scope" value="Eukaryota"/>
</dbReference>
<dbReference type="GeneTree" id="ENSGT00940000155073"/>
<dbReference type="HOGENOM" id="CLU_166234_1_0_1"/>
<dbReference type="InParanoid" id="Q06318"/>
<dbReference type="OMA" id="MKIAITI"/>
<dbReference type="OrthoDB" id="9585556at2759"/>
<dbReference type="PhylomeDB" id="Q06318"/>
<dbReference type="TreeFam" id="TF338407"/>
<dbReference type="BioGRID-ORCS" id="22287">
    <property type="hits" value="3 hits in 78 CRISPR screens"/>
</dbReference>
<dbReference type="ChiTaRS" id="Scgb1a1">
    <property type="organism name" value="mouse"/>
</dbReference>
<dbReference type="PRO" id="PR:Q06318"/>
<dbReference type="Proteomes" id="UP000000589">
    <property type="component" value="Chromosome 19"/>
</dbReference>
<dbReference type="RNAct" id="Q06318">
    <property type="molecule type" value="protein"/>
</dbReference>
<dbReference type="Bgee" id="ENSMUSG00000024653">
    <property type="expression patterns" value="Expressed in right lung lobe and 53 other cell types or tissues"/>
</dbReference>
<dbReference type="ExpressionAtlas" id="Q06318">
    <property type="expression patterns" value="baseline and differential"/>
</dbReference>
<dbReference type="GO" id="GO:0005737">
    <property type="term" value="C:cytoplasm"/>
    <property type="evidence" value="ECO:0000314"/>
    <property type="project" value="MGI"/>
</dbReference>
<dbReference type="GO" id="GO:0005615">
    <property type="term" value="C:extracellular space"/>
    <property type="evidence" value="ECO:0007669"/>
    <property type="project" value="Ensembl"/>
</dbReference>
<dbReference type="GO" id="GO:0005635">
    <property type="term" value="C:nuclear envelope"/>
    <property type="evidence" value="ECO:0007669"/>
    <property type="project" value="Ensembl"/>
</dbReference>
<dbReference type="GO" id="GO:0030141">
    <property type="term" value="C:secretory granule"/>
    <property type="evidence" value="ECO:0007669"/>
    <property type="project" value="Ensembl"/>
</dbReference>
<dbReference type="GO" id="GO:0019834">
    <property type="term" value="F:phospholipase A2 inhibitor activity"/>
    <property type="evidence" value="ECO:0007669"/>
    <property type="project" value="UniProtKB-KW"/>
</dbReference>
<dbReference type="GO" id="GO:0097160">
    <property type="term" value="F:polychlorinated biphenyl binding"/>
    <property type="evidence" value="ECO:0007669"/>
    <property type="project" value="Ensembl"/>
</dbReference>
<dbReference type="GO" id="GO:0032696">
    <property type="term" value="P:negative regulation of interleukin-13 production"/>
    <property type="evidence" value="ECO:0000314"/>
    <property type="project" value="MGI"/>
</dbReference>
<dbReference type="GO" id="GO:0032713">
    <property type="term" value="P:negative regulation of interleukin-4 production"/>
    <property type="evidence" value="ECO:0000314"/>
    <property type="project" value="MGI"/>
</dbReference>
<dbReference type="GO" id="GO:0032714">
    <property type="term" value="P:negative regulation of interleukin-5 production"/>
    <property type="evidence" value="ECO:0000314"/>
    <property type="project" value="MGI"/>
</dbReference>
<dbReference type="GO" id="GO:0042130">
    <property type="term" value="P:negative regulation of T cell proliferation"/>
    <property type="evidence" value="ECO:0000314"/>
    <property type="project" value="MGI"/>
</dbReference>
<dbReference type="GO" id="GO:0000122">
    <property type="term" value="P:negative regulation of transcription by RNA polymerase II"/>
    <property type="evidence" value="ECO:0000314"/>
    <property type="project" value="MGI"/>
</dbReference>
<dbReference type="GO" id="GO:0032689">
    <property type="term" value="P:negative regulation of type II interferon production"/>
    <property type="evidence" value="ECO:0000314"/>
    <property type="project" value="MGI"/>
</dbReference>
<dbReference type="GO" id="GO:0050727">
    <property type="term" value="P:regulation of inflammatory response"/>
    <property type="evidence" value="ECO:0000314"/>
    <property type="project" value="MGI"/>
</dbReference>
<dbReference type="GO" id="GO:0043488">
    <property type="term" value="P:regulation of mRNA stability"/>
    <property type="evidence" value="ECO:0000314"/>
    <property type="project" value="MGI"/>
</dbReference>
<dbReference type="GO" id="GO:0034097">
    <property type="term" value="P:response to cytokine"/>
    <property type="evidence" value="ECO:0007669"/>
    <property type="project" value="Ensembl"/>
</dbReference>
<dbReference type="GO" id="GO:0071774">
    <property type="term" value="P:response to fibroblast growth factor"/>
    <property type="evidence" value="ECO:0007669"/>
    <property type="project" value="Ensembl"/>
</dbReference>
<dbReference type="GO" id="GO:0051384">
    <property type="term" value="P:response to glucocorticoid"/>
    <property type="evidence" value="ECO:0007669"/>
    <property type="project" value="Ensembl"/>
</dbReference>
<dbReference type="GO" id="GO:0032496">
    <property type="term" value="P:response to lipopolysaccharide"/>
    <property type="evidence" value="ECO:0007669"/>
    <property type="project" value="Ensembl"/>
</dbReference>
<dbReference type="GO" id="GO:0010193">
    <property type="term" value="P:response to ozone"/>
    <property type="evidence" value="ECO:0007669"/>
    <property type="project" value="Ensembl"/>
</dbReference>
<dbReference type="GO" id="GO:0034021">
    <property type="term" value="P:response to silicon dioxide"/>
    <property type="evidence" value="ECO:0007669"/>
    <property type="project" value="Ensembl"/>
</dbReference>
<dbReference type="GO" id="GO:0009410">
    <property type="term" value="P:response to xenobiotic stimulus"/>
    <property type="evidence" value="ECO:0007669"/>
    <property type="project" value="Ensembl"/>
</dbReference>
<dbReference type="GO" id="GO:0007165">
    <property type="term" value="P:signal transduction"/>
    <property type="evidence" value="ECO:0007669"/>
    <property type="project" value="InterPro"/>
</dbReference>
<dbReference type="GO" id="GO:0042098">
    <property type="term" value="P:T cell proliferation"/>
    <property type="evidence" value="ECO:0000314"/>
    <property type="project" value="MGI"/>
</dbReference>
<dbReference type="CDD" id="cd00633">
    <property type="entry name" value="Secretoglobin"/>
    <property type="match status" value="1"/>
</dbReference>
<dbReference type="FunFam" id="1.10.210.10:FF:000001">
    <property type="entry name" value="Uteroglobin"/>
    <property type="match status" value="1"/>
</dbReference>
<dbReference type="Gene3D" id="1.10.210.10">
    <property type="entry name" value="Secretoglobin"/>
    <property type="match status" value="1"/>
</dbReference>
<dbReference type="InterPro" id="IPR016126">
    <property type="entry name" value="Secretoglobin"/>
</dbReference>
<dbReference type="InterPro" id="IPR043215">
    <property type="entry name" value="Secretoglobin_1C-like"/>
</dbReference>
<dbReference type="InterPro" id="IPR035960">
    <property type="entry name" value="Secretoglobin_sf"/>
</dbReference>
<dbReference type="InterPro" id="IPR000329">
    <property type="entry name" value="Uteroglobin"/>
</dbReference>
<dbReference type="PANTHER" id="PTHR10136">
    <property type="entry name" value="SECRETOGLOBIN FAMILY 1 MEMBER"/>
    <property type="match status" value="1"/>
</dbReference>
<dbReference type="PANTHER" id="PTHR10136:SF6">
    <property type="entry name" value="UTEROGLOBIN"/>
    <property type="match status" value="1"/>
</dbReference>
<dbReference type="Pfam" id="PF01099">
    <property type="entry name" value="Uteroglobin"/>
    <property type="match status" value="1"/>
</dbReference>
<dbReference type="PRINTS" id="PR00486">
    <property type="entry name" value="UTEROGLOBIN"/>
</dbReference>
<dbReference type="SMART" id="SM00096">
    <property type="entry name" value="UTG"/>
    <property type="match status" value="1"/>
</dbReference>
<dbReference type="SUPFAM" id="SSF48201">
    <property type="entry name" value="Uteroglobin-like"/>
    <property type="match status" value="1"/>
</dbReference>
<dbReference type="PROSITE" id="PS51311">
    <property type="entry name" value="SCGB"/>
    <property type="match status" value="1"/>
</dbReference>
<comment type="function">
    <text>Binds phosphatidylcholine, phosphatidylinositol, polychlorinated biphenyls (PCB) and weakly progesterone, potent inhibitor of phospholipase A2.</text>
</comment>
<comment type="subunit">
    <text evidence="2">Antiparallel homodimer; disulfide-linked (By similarity). Interaction with LMBR1L is controversial (By similarity).</text>
</comment>
<comment type="subcellular location">
    <subcellularLocation>
        <location>Secreted</location>
    </subcellularLocation>
</comment>
<comment type="tissue specificity">
    <text>Club cells (nonciliated cells of the surface epithelium of the pulmonary airways).</text>
</comment>
<comment type="developmental stage">
    <text>Appears on the eighteenth day of gestation in the airway epithelium.</text>
</comment>
<comment type="induction">
    <text>By glucocorticoids.</text>
</comment>
<comment type="similarity">
    <text evidence="4">Belongs to the secretoglobin family.</text>
</comment>
<proteinExistence type="evidence at protein level"/>
<gene>
    <name type="primary">Scgb1a1</name>
    <name type="synonym">Cc10</name>
    <name type="synonym">Ugb</name>
    <name type="synonym">Utg</name>
</gene>
<feature type="signal peptide" evidence="3">
    <location>
        <begin position="1"/>
        <end position="21"/>
    </location>
</feature>
<feature type="chain" id="PRO_0000036366" description="Uteroglobin">
    <location>
        <begin position="22"/>
        <end position="96"/>
    </location>
</feature>
<feature type="disulfide bond" description="Interchain (with C-90)" evidence="1">
    <location>
        <position position="24"/>
    </location>
</feature>
<feature type="disulfide bond" description="Interchain (with C-24)" evidence="1">
    <location>
        <position position="90"/>
    </location>
</feature>
<reference key="1">
    <citation type="journal article" date="1993" name="Am. J. Respir. Cell Mol. Biol.">
        <title>Cloning and tissue-specific expression of the cDNA for the mouse Clara cell 10 kD protein: comparison of endogenous expression to rabbit uteroglobin promoter-driven transgene expression.</title>
        <authorList>
            <person name="Margraf L.R."/>
            <person name="Finegold M.J."/>
            <person name="Stanley L.A."/>
            <person name="Major A."/>
            <person name="Hawkins H.K."/>
            <person name="DeMayo F.J."/>
        </authorList>
    </citation>
    <scope>NUCLEOTIDE SEQUENCE [MRNA]</scope>
    <source>
        <tissue>Lung</tissue>
    </source>
</reference>
<reference key="2">
    <citation type="journal article" date="1994" name="Genomics">
        <title>Structure and regulation of the murine Clara cell secretory protein gene.</title>
        <authorList>
            <person name="Stripp B.R."/>
            <person name="Huffman J.A."/>
            <person name="Bohinski R.J."/>
        </authorList>
    </citation>
    <scope>NUCLEOTIDE SEQUENCE [GENOMIC DNA]</scope>
</reference>
<reference key="3">
    <citation type="journal article" date="1993" name="Exp. Lung Res.">
        <title>Mouse Clara cell 10-kDa (CC10) protein: cDNA nucleotide sequence and molecular basis for the variation in progesterone binding of CC10 from different species.</title>
        <authorList>
            <person name="Singh G."/>
            <person name="Katyal S.L."/>
            <person name="Brown W.E."/>
            <person name="Kennedy A.L."/>
        </authorList>
    </citation>
    <scope>NUCLEOTIDE SEQUENCE [MRNA]</scope>
    <scope>PROTEIN SEQUENCE OF 22 AND 25-35</scope>
    <source>
        <tissue>Lung</tissue>
    </source>
</reference>
<reference key="4">
    <citation type="journal article" date="1993" name="Biochem. Biophys. Res. Commun.">
        <title>Cloning and characterization of the mouse Clara cell specific 10 kDa protein gene: comparison of the 5'-flanking region with the human rat and rabbit gene.</title>
        <authorList>
            <person name="Ray M.K."/>
            <person name="Magdaleno S."/>
            <person name="O'Malley B.W."/>
            <person name="Demayo F.J."/>
        </authorList>
    </citation>
    <scope>NUCLEOTIDE SEQUENCE</scope>
    <source>
        <strain>129/Sv</strain>
        <tissue>Lung</tissue>
    </source>
</reference>
<reference key="5">
    <citation type="journal article" date="2004" name="Genome Res.">
        <title>The status, quality, and expansion of the NIH full-length cDNA project: the Mammalian Gene Collection (MGC).</title>
        <authorList>
            <consortium name="The MGC Project Team"/>
        </authorList>
    </citation>
    <scope>NUCLEOTIDE SEQUENCE [LARGE SCALE MRNA]</scope>
    <source>
        <tissue>Uterus</tissue>
    </source>
</reference>
<reference key="6">
    <citation type="journal article" date="2010" name="Cell">
        <title>A tissue-specific atlas of mouse protein phosphorylation and expression.</title>
        <authorList>
            <person name="Huttlin E.L."/>
            <person name="Jedrychowski M.P."/>
            <person name="Elias J.E."/>
            <person name="Goswami T."/>
            <person name="Rad R."/>
            <person name="Beausoleil S.A."/>
            <person name="Villen J."/>
            <person name="Haas W."/>
            <person name="Sowa M.E."/>
            <person name="Gygi S.P."/>
        </authorList>
    </citation>
    <scope>IDENTIFICATION BY MASS SPECTROMETRY [LARGE SCALE ANALYSIS]</scope>
    <source>
        <tissue>Lung</tissue>
    </source>
</reference>
<evidence type="ECO:0000250" key="1"/>
<evidence type="ECO:0000250" key="2">
    <source>
        <dbReference type="UniProtKB" id="P11684"/>
    </source>
</evidence>
<evidence type="ECO:0000255" key="3"/>
<evidence type="ECO:0000305" key="4"/>
<keyword id="KW-0903">Direct protein sequencing</keyword>
<keyword id="KW-1015">Disulfide bond</keyword>
<keyword id="KW-0593">Phospholipase A2 inhibitor</keyword>
<keyword id="KW-1185">Reference proteome</keyword>
<keyword id="KW-0964">Secreted</keyword>
<keyword id="KW-0732">Signal</keyword>
<name>UTER_MOUSE</name>
<protein>
    <recommendedName>
        <fullName>Uteroglobin</fullName>
    </recommendedName>
    <alternativeName>
        <fullName>Club cell 17 kDa protein</fullName>
    </alternativeName>
    <alternativeName>
        <fullName>Club cell phospholipid-binding protein</fullName>
        <shortName>CCPBP</shortName>
    </alternativeName>
    <alternativeName>
        <fullName>Club cells 10 kDa secretory protein</fullName>
        <shortName>CC10</shortName>
    </alternativeName>
    <alternativeName>
        <fullName>PCB-binding protein</fullName>
    </alternativeName>
    <alternativeName>
        <fullName>Secretoglobin family 1A member 1</fullName>
    </alternativeName>
</protein>